<sequence length="121" mass="14365">MDSNTVSSFQDILMRMSKMQLGSSSEDLNGMITQFESLKLYRDSLGEAVMRMGDLHSLQNRNGKWREQLSQKFEEIRWLIEEVRHRLKITENSFEQITFMQALQLLLEVEQEIRTFSFQLI</sequence>
<accession>Q0A463</accession>
<name>NEP_I68A3</name>
<proteinExistence type="inferred from homology"/>
<comment type="function">
    <text evidence="1">Mediates the nuclear export of encapsidated genomic RNAs (ribonucleoproteins, RNPs). Acts as an adapter between viral RNPs complexes and the nuclear export machinery of the cell. Possesses no intrinsic RNA-binding activity, but includes a C-terminal M1-binding domain. This domain is believed to allow recognition of RNPs bound to the protein M1. Since protein M1 is not available in large quantities before late stages of infection, such an indirect recognition mechanism probably ensures that genomic RNPs are not exported from the host nucleus until sufficient quantities of viral mRNA and progeny genomic RNA have been synthesized. Furthermore, the RNPs enter the host cytoplasm only when associated with the M1 protein that is necessary to guide them to the plasma membrane. May down-regulate viral RNA synthesis when overproduced.</text>
</comment>
<comment type="subunit">
    <text evidence="1">Interacts with protein M1. May interact with host nucleoporin RAB/HRB and exportin XPO1/CRM1.</text>
</comment>
<comment type="subcellular location">
    <subcellularLocation>
        <location evidence="1">Virion</location>
    </subcellularLocation>
    <subcellularLocation>
        <location evidence="1">Host nucleus</location>
    </subcellularLocation>
</comment>
<comment type="alternative products">
    <event type="alternative splicing"/>
    <isoform>
        <id>Q0A463-1</id>
        <name>NEP</name>
        <name>NS2</name>
        <sequence type="displayed"/>
    </isoform>
    <isoform>
        <id>Q0A462-1</id>
        <name>NS1</name>
        <sequence type="external"/>
    </isoform>
</comment>
<comment type="miscellaneous">
    <text>Average number present in a viral particle is estimated to be 130-200 molecules.</text>
</comment>
<comment type="similarity">
    <text evidence="1">Belongs to the influenza viruses NEP family.</text>
</comment>
<protein>
    <recommendedName>
        <fullName evidence="1">Nuclear export protein</fullName>
        <shortName evidence="1">NEP</shortName>
    </recommendedName>
    <alternativeName>
        <fullName evidence="1">Non-structural protein 2</fullName>
        <shortName evidence="1">NS2</shortName>
    </alternativeName>
</protein>
<reference key="1">
    <citation type="journal article" date="2006" name="Science">
        <title>Large-scale sequence analysis of avian influenza isolates.</title>
        <authorList>
            <person name="Obenauer J.C."/>
            <person name="Denson J."/>
            <person name="Mehta P.K."/>
            <person name="Su X."/>
            <person name="Mukatira S."/>
            <person name="Finkelstein D.B."/>
            <person name="Xu X."/>
            <person name="Wang J."/>
            <person name="Ma J."/>
            <person name="Fan Y."/>
            <person name="Rakestraw K.M."/>
            <person name="Webster R.G."/>
            <person name="Hoffmann E."/>
            <person name="Krauss S."/>
            <person name="Zheng J."/>
            <person name="Zhang Z."/>
            <person name="Naeve C.W."/>
        </authorList>
    </citation>
    <scope>NUCLEOTIDE SEQUENCE [GENOMIC RNA]</scope>
</reference>
<evidence type="ECO:0000255" key="1">
    <source>
        <dbReference type="HAMAP-Rule" id="MF_04067"/>
    </source>
</evidence>
<feature type="chain" id="PRO_0000274808" description="Nuclear export protein">
    <location>
        <begin position="1"/>
        <end position="121"/>
    </location>
</feature>
<feature type="short sequence motif" description="Nuclear export signal" evidence="1">
    <location>
        <begin position="12"/>
        <end position="21"/>
    </location>
</feature>
<feature type="short sequence motif" description="Nuclear export signal" evidence="1">
    <location>
        <begin position="85"/>
        <end position="94"/>
    </location>
</feature>
<dbReference type="EMBL" id="CY014661">
    <property type="protein sequence ID" value="ABI84522.1"/>
    <property type="molecule type" value="Genomic_RNA"/>
</dbReference>
<dbReference type="SMR" id="Q0A463"/>
<dbReference type="Proteomes" id="UP000007770">
    <property type="component" value="Genome"/>
</dbReference>
<dbReference type="GO" id="GO:0042025">
    <property type="term" value="C:host cell nucleus"/>
    <property type="evidence" value="ECO:0007669"/>
    <property type="project" value="UniProtKB-SubCell"/>
</dbReference>
<dbReference type="GO" id="GO:0044423">
    <property type="term" value="C:virion component"/>
    <property type="evidence" value="ECO:0007669"/>
    <property type="project" value="UniProtKB-UniRule"/>
</dbReference>
<dbReference type="GO" id="GO:0039675">
    <property type="term" value="P:exit of virus from host cell nucleus through nuclear pore"/>
    <property type="evidence" value="ECO:0007669"/>
    <property type="project" value="UniProtKB-UniRule"/>
</dbReference>
<dbReference type="Gene3D" id="1.10.287.230">
    <property type="match status" value="1"/>
</dbReference>
<dbReference type="Gene3D" id="1.10.287.10">
    <property type="entry name" value="S15/NS1, RNA-binding"/>
    <property type="match status" value="1"/>
</dbReference>
<dbReference type="HAMAP" id="MF_04067">
    <property type="entry name" value="INFV_NEP"/>
    <property type="match status" value="1"/>
</dbReference>
<dbReference type="InterPro" id="IPR000968">
    <property type="entry name" value="Flu_NS2"/>
</dbReference>
<dbReference type="Pfam" id="PF00601">
    <property type="entry name" value="Flu_NS2"/>
    <property type="match status" value="1"/>
</dbReference>
<dbReference type="SUPFAM" id="SSF101156">
    <property type="entry name" value="Nonstructural protein ns2, Nep, M1-binding domain"/>
    <property type="match status" value="1"/>
</dbReference>
<keyword id="KW-0025">Alternative splicing</keyword>
<keyword id="KW-1048">Host nucleus</keyword>
<keyword id="KW-0945">Host-virus interaction</keyword>
<keyword id="KW-0813">Transport</keyword>
<keyword id="KW-0946">Virion</keyword>
<gene>
    <name evidence="1" type="primary">NS</name>
</gene>
<organism>
    <name type="scientific">Influenza A virus (strain A/Turkey/Ontario/6118/1968 H8N4)</name>
    <dbReference type="NCBI Taxonomy" id="311175"/>
    <lineage>
        <taxon>Viruses</taxon>
        <taxon>Riboviria</taxon>
        <taxon>Orthornavirae</taxon>
        <taxon>Negarnaviricota</taxon>
        <taxon>Polyploviricotina</taxon>
        <taxon>Insthoviricetes</taxon>
        <taxon>Articulavirales</taxon>
        <taxon>Orthomyxoviridae</taxon>
        <taxon>Alphainfluenzavirus</taxon>
        <taxon>Alphainfluenzavirus influenzae</taxon>
        <taxon>Influenza A virus</taxon>
    </lineage>
</organism>
<organismHost>
    <name type="scientific">Aves</name>
    <dbReference type="NCBI Taxonomy" id="8782"/>
</organismHost>